<evidence type="ECO:0000250" key="1"/>
<evidence type="ECO:0000305" key="2"/>
<reference key="1">
    <citation type="journal article" date="2002" name="Mol. Biol. Cell">
        <title>The 14-kDa dynein light chain-family protein Dlc1 is required for regular oscillatory nuclear movement and efficient recombination during meiotic prophase in fission yeast.</title>
        <authorList>
            <person name="Miki F."/>
            <person name="Okazaki K."/>
            <person name="Shimanuki M."/>
            <person name="Yamamoto A."/>
            <person name="Hiraoka Y."/>
            <person name="Niwa O."/>
        </authorList>
    </citation>
    <scope>NUCLEOTIDE SEQUENCE [MRNA]</scope>
    <source>
        <strain>972 / ATCC 24843</strain>
    </source>
</reference>
<reference key="2">
    <citation type="journal article" date="2002" name="Nature">
        <title>The genome sequence of Schizosaccharomyces pombe.</title>
        <authorList>
            <person name="Wood V."/>
            <person name="Gwilliam R."/>
            <person name="Rajandream M.A."/>
            <person name="Lyne M.H."/>
            <person name="Lyne R."/>
            <person name="Stewart A."/>
            <person name="Sgouros J.G."/>
            <person name="Peat N."/>
            <person name="Hayles J."/>
            <person name="Baker S.G."/>
            <person name="Basham D."/>
            <person name="Bowman S."/>
            <person name="Brooks K."/>
            <person name="Brown D."/>
            <person name="Brown S."/>
            <person name="Chillingworth T."/>
            <person name="Churcher C.M."/>
            <person name="Collins M."/>
            <person name="Connor R."/>
            <person name="Cronin A."/>
            <person name="Davis P."/>
            <person name="Feltwell T."/>
            <person name="Fraser A."/>
            <person name="Gentles S."/>
            <person name="Goble A."/>
            <person name="Hamlin N."/>
            <person name="Harris D.E."/>
            <person name="Hidalgo J."/>
            <person name="Hodgson G."/>
            <person name="Holroyd S."/>
            <person name="Hornsby T."/>
            <person name="Howarth S."/>
            <person name="Huckle E.J."/>
            <person name="Hunt S."/>
            <person name="Jagels K."/>
            <person name="James K.D."/>
            <person name="Jones L."/>
            <person name="Jones M."/>
            <person name="Leather S."/>
            <person name="McDonald S."/>
            <person name="McLean J."/>
            <person name="Mooney P."/>
            <person name="Moule S."/>
            <person name="Mungall K.L."/>
            <person name="Murphy L.D."/>
            <person name="Niblett D."/>
            <person name="Odell C."/>
            <person name="Oliver K."/>
            <person name="O'Neil S."/>
            <person name="Pearson D."/>
            <person name="Quail M.A."/>
            <person name="Rabbinowitsch E."/>
            <person name="Rutherford K.M."/>
            <person name="Rutter S."/>
            <person name="Saunders D."/>
            <person name="Seeger K."/>
            <person name="Sharp S."/>
            <person name="Skelton J."/>
            <person name="Simmonds M.N."/>
            <person name="Squares R."/>
            <person name="Squares S."/>
            <person name="Stevens K."/>
            <person name="Taylor K."/>
            <person name="Taylor R.G."/>
            <person name="Tivey A."/>
            <person name="Walsh S.V."/>
            <person name="Warren T."/>
            <person name="Whitehead S."/>
            <person name="Woodward J.R."/>
            <person name="Volckaert G."/>
            <person name="Aert R."/>
            <person name="Robben J."/>
            <person name="Grymonprez B."/>
            <person name="Weltjens I."/>
            <person name="Vanstreels E."/>
            <person name="Rieger M."/>
            <person name="Schaefer M."/>
            <person name="Mueller-Auer S."/>
            <person name="Gabel C."/>
            <person name="Fuchs M."/>
            <person name="Duesterhoeft A."/>
            <person name="Fritzc C."/>
            <person name="Holzer E."/>
            <person name="Moestl D."/>
            <person name="Hilbert H."/>
            <person name="Borzym K."/>
            <person name="Langer I."/>
            <person name="Beck A."/>
            <person name="Lehrach H."/>
            <person name="Reinhardt R."/>
            <person name="Pohl T.M."/>
            <person name="Eger P."/>
            <person name="Zimmermann W."/>
            <person name="Wedler H."/>
            <person name="Wambutt R."/>
            <person name="Purnelle B."/>
            <person name="Goffeau A."/>
            <person name="Cadieu E."/>
            <person name="Dreano S."/>
            <person name="Gloux S."/>
            <person name="Lelaure V."/>
            <person name="Mottier S."/>
            <person name="Galibert F."/>
            <person name="Aves S.J."/>
            <person name="Xiang Z."/>
            <person name="Hunt C."/>
            <person name="Moore K."/>
            <person name="Hurst S.M."/>
            <person name="Lucas M."/>
            <person name="Rochet M."/>
            <person name="Gaillardin C."/>
            <person name="Tallada V.A."/>
            <person name="Garzon A."/>
            <person name="Thode G."/>
            <person name="Daga R.R."/>
            <person name="Cruzado L."/>
            <person name="Jimenez J."/>
            <person name="Sanchez M."/>
            <person name="del Rey F."/>
            <person name="Benito J."/>
            <person name="Dominguez A."/>
            <person name="Revuelta J.L."/>
            <person name="Moreno S."/>
            <person name="Armstrong J."/>
            <person name="Forsburg S.L."/>
            <person name="Cerutti L."/>
            <person name="Lowe T."/>
            <person name="McCombie W.R."/>
            <person name="Paulsen I."/>
            <person name="Potashkin J."/>
            <person name="Shpakovski G.V."/>
            <person name="Ussery D."/>
            <person name="Barrell B.G."/>
            <person name="Nurse P."/>
        </authorList>
    </citation>
    <scope>NUCLEOTIDE SEQUENCE [LARGE SCALE GENOMIC DNA]</scope>
    <source>
        <strain>972 / ATCC 24843</strain>
    </source>
</reference>
<proteinExistence type="evidence at protein level"/>
<sequence length="111" mass="12254">MSCPIDSKKLEEICLEAAQPVLKASEYDGDKTAEMNQSVIYAVLNALNKETQSYKWIVSSTLVQKLPEDHPSRGVHAAHAACWNCEKDGMTTIKESGEAIDVVLSIMWISI</sequence>
<name>DYLT_SCHPO</name>
<comment type="function">
    <text evidence="1">Acts as a non-catalytic accessory component of a dynein complex.</text>
</comment>
<comment type="interaction">
    <interactant intactId="EBI-1542278">
        <id>Q9UTS6</id>
    </interactant>
    <interactant intactId="EBI-1556587">
        <id>O42667</id>
        <label>ssm4</label>
    </interactant>
    <organismsDiffer>false</organismsDiffer>
    <experiments>3</experiments>
</comment>
<comment type="subcellular location">
    <subcellularLocation>
        <location evidence="2">Cytoplasm</location>
        <location evidence="2">Cytoskeleton</location>
    </subcellularLocation>
</comment>
<comment type="similarity">
    <text evidence="2">Belongs to the dynein light chain Tctex-type family.</text>
</comment>
<protein>
    <recommendedName>
        <fullName>Dynein light chain Tctex-type</fullName>
    </recommendedName>
    <alternativeName>
        <fullName>TCTEX-1 protein homolog</fullName>
    </alternativeName>
</protein>
<accession>Q9UTS6</accession>
<accession>Q9UTG7</accession>
<keyword id="KW-0963">Cytoplasm</keyword>
<keyword id="KW-0206">Cytoskeleton</keyword>
<keyword id="KW-0243">Dynein</keyword>
<keyword id="KW-0493">Microtubule</keyword>
<keyword id="KW-0505">Motor protein</keyword>
<keyword id="KW-1185">Reference proteome</keyword>
<feature type="chain" id="PRO_0000195156" description="Dynein light chain Tctex-type">
    <location>
        <begin position="1"/>
        <end position="111"/>
    </location>
</feature>
<dbReference type="EMBL" id="AF196291">
    <property type="protein sequence ID" value="AAF09243.1"/>
    <property type="molecule type" value="mRNA"/>
</dbReference>
<dbReference type="EMBL" id="CU329670">
    <property type="protein sequence ID" value="CAD99133.1"/>
    <property type="molecule type" value="Genomic_DNA"/>
</dbReference>
<dbReference type="RefSeq" id="NP_001018252.1">
    <property type="nucleotide sequence ID" value="NM_001019348.2"/>
</dbReference>
<dbReference type="SMR" id="Q9UTS6"/>
<dbReference type="BioGRID" id="280567">
    <property type="interactions" value="42"/>
</dbReference>
<dbReference type="FunCoup" id="Q9UTS6">
    <property type="interactions" value="40"/>
</dbReference>
<dbReference type="IntAct" id="Q9UTS6">
    <property type="interactions" value="2"/>
</dbReference>
<dbReference type="STRING" id="284812.Q9UTS6"/>
<dbReference type="iPTMnet" id="Q9UTS6"/>
<dbReference type="PaxDb" id="4896-SPAC1805.08.1"/>
<dbReference type="EnsemblFungi" id="SPAC1805.08.1">
    <property type="protein sequence ID" value="SPAC1805.08.1:pep"/>
    <property type="gene ID" value="SPAC1805.08"/>
</dbReference>
<dbReference type="GeneID" id="3361491"/>
<dbReference type="KEGG" id="spo:3361491"/>
<dbReference type="PomBase" id="SPAC1805.08">
    <property type="gene designation" value="dlc1"/>
</dbReference>
<dbReference type="VEuPathDB" id="FungiDB:SPAC1805.08"/>
<dbReference type="eggNOG" id="KOG4081">
    <property type="taxonomic scope" value="Eukaryota"/>
</dbReference>
<dbReference type="HOGENOM" id="CLU_2159868_0_0_1"/>
<dbReference type="InParanoid" id="Q9UTS6"/>
<dbReference type="OMA" id="YKFACNS"/>
<dbReference type="PhylomeDB" id="Q9UTS6"/>
<dbReference type="Reactome" id="R-SPO-6798695">
    <property type="pathway name" value="Neutrophil degranulation"/>
</dbReference>
<dbReference type="CD-CODE" id="576F0A76">
    <property type="entry name" value="Centrosome"/>
</dbReference>
<dbReference type="PRO" id="PR:Q9UTS6"/>
<dbReference type="Proteomes" id="UP000002485">
    <property type="component" value="Chromosome I"/>
</dbReference>
<dbReference type="GO" id="GO:0030981">
    <property type="term" value="C:cortical microtubule cytoskeleton"/>
    <property type="evidence" value="ECO:0000314"/>
    <property type="project" value="PomBase"/>
</dbReference>
<dbReference type="GO" id="GO:0005737">
    <property type="term" value="C:cytoplasm"/>
    <property type="evidence" value="ECO:0000318"/>
    <property type="project" value="GO_Central"/>
</dbReference>
<dbReference type="GO" id="GO:0005868">
    <property type="term" value="C:cytoplasmic dynein complex"/>
    <property type="evidence" value="ECO:0000318"/>
    <property type="project" value="GO_Central"/>
</dbReference>
<dbReference type="GO" id="GO:0005829">
    <property type="term" value="C:cytosol"/>
    <property type="evidence" value="ECO:0007005"/>
    <property type="project" value="PomBase"/>
</dbReference>
<dbReference type="GO" id="GO:0032117">
    <property type="term" value="C:horsetail-astral microtubule array"/>
    <property type="evidence" value="ECO:0000314"/>
    <property type="project" value="PomBase"/>
</dbReference>
<dbReference type="GO" id="GO:0035974">
    <property type="term" value="C:meiotic spindle pole body"/>
    <property type="evidence" value="ECO:0000314"/>
    <property type="project" value="PomBase"/>
</dbReference>
<dbReference type="GO" id="GO:0005874">
    <property type="term" value="C:microtubule"/>
    <property type="evidence" value="ECO:0007669"/>
    <property type="project" value="UniProtKB-KW"/>
</dbReference>
<dbReference type="GO" id="GO:0044732">
    <property type="term" value="C:mitotic spindle pole body"/>
    <property type="evidence" value="ECO:0000314"/>
    <property type="project" value="PomBase"/>
</dbReference>
<dbReference type="GO" id="GO:0044816">
    <property type="term" value="C:Nsk1-Dlc1 complex"/>
    <property type="evidence" value="ECO:0000314"/>
    <property type="project" value="PomBase"/>
</dbReference>
<dbReference type="GO" id="GO:0005634">
    <property type="term" value="C:nucleus"/>
    <property type="evidence" value="ECO:0007005"/>
    <property type="project" value="PomBase"/>
</dbReference>
<dbReference type="GO" id="GO:0110092">
    <property type="term" value="C:nucleus leading edge"/>
    <property type="evidence" value="ECO:0000314"/>
    <property type="project" value="PomBase"/>
</dbReference>
<dbReference type="GO" id="GO:0045505">
    <property type="term" value="F:dynein intermediate chain binding"/>
    <property type="evidence" value="ECO:0000318"/>
    <property type="project" value="GO_Central"/>
</dbReference>
<dbReference type="GO" id="GO:0051315">
    <property type="term" value="P:attachment of mitotic spindle microtubules to kinetochore"/>
    <property type="evidence" value="ECO:0000315"/>
    <property type="project" value="PomBase"/>
</dbReference>
<dbReference type="GO" id="GO:0030989">
    <property type="term" value="P:dynein-driven meiotic oscillatory nuclear movement"/>
    <property type="evidence" value="ECO:0000315"/>
    <property type="project" value="PomBase"/>
</dbReference>
<dbReference type="GO" id="GO:0000742">
    <property type="term" value="P:karyogamy involved in conjugation with cellular fusion"/>
    <property type="evidence" value="ECO:0000315"/>
    <property type="project" value="PomBase"/>
</dbReference>
<dbReference type="GO" id="GO:0007018">
    <property type="term" value="P:microtubule-based movement"/>
    <property type="evidence" value="ECO:0000318"/>
    <property type="project" value="GO_Central"/>
</dbReference>
<dbReference type="CDD" id="cd21456">
    <property type="entry name" value="DLC-like_SpDlc1-like"/>
    <property type="match status" value="1"/>
</dbReference>
<dbReference type="Gene3D" id="3.30.1140.40">
    <property type="entry name" value="Tctex-1"/>
    <property type="match status" value="1"/>
</dbReference>
<dbReference type="InterPro" id="IPR005334">
    <property type="entry name" value="Tctex-1-like"/>
</dbReference>
<dbReference type="InterPro" id="IPR038586">
    <property type="entry name" value="Tctex-1-like_sf"/>
</dbReference>
<dbReference type="PANTHER" id="PTHR21255:SF4">
    <property type="entry name" value="DYNEIN LIGHT CHAIN TCTEX-TYPE"/>
    <property type="match status" value="1"/>
</dbReference>
<dbReference type="PANTHER" id="PTHR21255">
    <property type="entry name" value="T-COMPLEX-ASSOCIATED-TESTIS-EXPRESSED 1/ DYNEIN LIGHT CHAIN"/>
    <property type="match status" value="1"/>
</dbReference>
<dbReference type="Pfam" id="PF03645">
    <property type="entry name" value="Tctex-1"/>
    <property type="match status" value="1"/>
</dbReference>
<organism>
    <name type="scientific">Schizosaccharomyces pombe (strain 972 / ATCC 24843)</name>
    <name type="common">Fission yeast</name>
    <dbReference type="NCBI Taxonomy" id="284812"/>
    <lineage>
        <taxon>Eukaryota</taxon>
        <taxon>Fungi</taxon>
        <taxon>Dikarya</taxon>
        <taxon>Ascomycota</taxon>
        <taxon>Taphrinomycotina</taxon>
        <taxon>Schizosaccharomycetes</taxon>
        <taxon>Schizosaccharomycetales</taxon>
        <taxon>Schizosaccharomycetaceae</taxon>
        <taxon>Schizosaccharomyces</taxon>
    </lineage>
</organism>
<gene>
    <name type="primary">dlc1</name>
    <name type="ORF">SPAC1805.08</name>
</gene>